<protein>
    <recommendedName>
        <fullName evidence="1">Small ribosomal subunit protein bS20</fullName>
    </recommendedName>
    <alternativeName>
        <fullName evidence="2">30S ribosomal protein S20</fullName>
    </alternativeName>
</protein>
<proteinExistence type="inferred from homology"/>
<dbReference type="EMBL" id="CP000724">
    <property type="protein sequence ID" value="ABR49196.1"/>
    <property type="molecule type" value="Genomic_DNA"/>
</dbReference>
<dbReference type="RefSeq" id="WP_012064162.1">
    <property type="nucleotide sequence ID" value="NC_009633.1"/>
</dbReference>
<dbReference type="SMR" id="A6TSM8"/>
<dbReference type="STRING" id="293826.Amet_3056"/>
<dbReference type="KEGG" id="amt:Amet_3056"/>
<dbReference type="eggNOG" id="COG0268">
    <property type="taxonomic scope" value="Bacteria"/>
</dbReference>
<dbReference type="HOGENOM" id="CLU_160655_0_0_9"/>
<dbReference type="OrthoDB" id="9808392at2"/>
<dbReference type="Proteomes" id="UP000001572">
    <property type="component" value="Chromosome"/>
</dbReference>
<dbReference type="GO" id="GO:0005829">
    <property type="term" value="C:cytosol"/>
    <property type="evidence" value="ECO:0007669"/>
    <property type="project" value="TreeGrafter"/>
</dbReference>
<dbReference type="GO" id="GO:0015935">
    <property type="term" value="C:small ribosomal subunit"/>
    <property type="evidence" value="ECO:0007669"/>
    <property type="project" value="TreeGrafter"/>
</dbReference>
<dbReference type="GO" id="GO:0070181">
    <property type="term" value="F:small ribosomal subunit rRNA binding"/>
    <property type="evidence" value="ECO:0007669"/>
    <property type="project" value="TreeGrafter"/>
</dbReference>
<dbReference type="GO" id="GO:0003735">
    <property type="term" value="F:structural constituent of ribosome"/>
    <property type="evidence" value="ECO:0007669"/>
    <property type="project" value="InterPro"/>
</dbReference>
<dbReference type="GO" id="GO:0006412">
    <property type="term" value="P:translation"/>
    <property type="evidence" value="ECO:0007669"/>
    <property type="project" value="UniProtKB-UniRule"/>
</dbReference>
<dbReference type="FunFam" id="1.20.58.110:FF:000001">
    <property type="entry name" value="30S ribosomal protein S20"/>
    <property type="match status" value="1"/>
</dbReference>
<dbReference type="Gene3D" id="1.20.58.110">
    <property type="entry name" value="Ribosomal protein S20"/>
    <property type="match status" value="1"/>
</dbReference>
<dbReference type="HAMAP" id="MF_00500">
    <property type="entry name" value="Ribosomal_bS20"/>
    <property type="match status" value="1"/>
</dbReference>
<dbReference type="InterPro" id="IPR002583">
    <property type="entry name" value="Ribosomal_bS20"/>
</dbReference>
<dbReference type="InterPro" id="IPR036510">
    <property type="entry name" value="Ribosomal_bS20_sf"/>
</dbReference>
<dbReference type="NCBIfam" id="TIGR00029">
    <property type="entry name" value="S20"/>
    <property type="match status" value="1"/>
</dbReference>
<dbReference type="PANTHER" id="PTHR33398">
    <property type="entry name" value="30S RIBOSOMAL PROTEIN S20"/>
    <property type="match status" value="1"/>
</dbReference>
<dbReference type="PANTHER" id="PTHR33398:SF1">
    <property type="entry name" value="SMALL RIBOSOMAL SUBUNIT PROTEIN BS20C"/>
    <property type="match status" value="1"/>
</dbReference>
<dbReference type="Pfam" id="PF01649">
    <property type="entry name" value="Ribosomal_S20p"/>
    <property type="match status" value="1"/>
</dbReference>
<dbReference type="SUPFAM" id="SSF46992">
    <property type="entry name" value="Ribosomal protein S20"/>
    <property type="match status" value="1"/>
</dbReference>
<accession>A6TSM8</accession>
<organism>
    <name type="scientific">Alkaliphilus metalliredigens (strain QYMF)</name>
    <dbReference type="NCBI Taxonomy" id="293826"/>
    <lineage>
        <taxon>Bacteria</taxon>
        <taxon>Bacillati</taxon>
        <taxon>Bacillota</taxon>
        <taxon>Clostridia</taxon>
        <taxon>Peptostreptococcales</taxon>
        <taxon>Natronincolaceae</taxon>
        <taxon>Alkaliphilus</taxon>
    </lineage>
</organism>
<evidence type="ECO:0000255" key="1">
    <source>
        <dbReference type="HAMAP-Rule" id="MF_00500"/>
    </source>
</evidence>
<evidence type="ECO:0000305" key="2"/>
<name>RS20_ALKMQ</name>
<comment type="function">
    <text evidence="1">Binds directly to 16S ribosomal RNA.</text>
</comment>
<comment type="similarity">
    <text evidence="1">Belongs to the bacterial ribosomal protein bS20 family.</text>
</comment>
<reference key="1">
    <citation type="journal article" date="2016" name="Genome Announc.">
        <title>Complete genome sequence of Alkaliphilus metalliredigens strain QYMF, an alkaliphilic and metal-reducing bacterium isolated from borax-contaminated leachate ponds.</title>
        <authorList>
            <person name="Hwang C."/>
            <person name="Copeland A."/>
            <person name="Lucas S."/>
            <person name="Lapidus A."/>
            <person name="Barry K."/>
            <person name="Detter J.C."/>
            <person name="Glavina Del Rio T."/>
            <person name="Hammon N."/>
            <person name="Israni S."/>
            <person name="Dalin E."/>
            <person name="Tice H."/>
            <person name="Pitluck S."/>
            <person name="Chertkov O."/>
            <person name="Brettin T."/>
            <person name="Bruce D."/>
            <person name="Han C."/>
            <person name="Schmutz J."/>
            <person name="Larimer F."/>
            <person name="Land M.L."/>
            <person name="Hauser L."/>
            <person name="Kyrpides N."/>
            <person name="Mikhailova N."/>
            <person name="Ye Q."/>
            <person name="Zhou J."/>
            <person name="Richardson P."/>
            <person name="Fields M.W."/>
        </authorList>
    </citation>
    <scope>NUCLEOTIDE SEQUENCE [LARGE SCALE GENOMIC DNA]</scope>
    <source>
        <strain>QYMF</strain>
    </source>
</reference>
<gene>
    <name evidence="1" type="primary">rpsT</name>
    <name type="ordered locus">Amet_3056</name>
</gene>
<sequence length="87" mass="9675">MANIKSAQKRIKVIAKKTARNRMIKSQLKTAIKRFEEAVEAGNLEEAKVKLTFVEKKLSQAAAKGTVHKSSASRKISRLAIRLNKAI</sequence>
<feature type="chain" id="PRO_1000060486" description="Small ribosomal subunit protein bS20">
    <location>
        <begin position="1"/>
        <end position="87"/>
    </location>
</feature>
<keyword id="KW-1185">Reference proteome</keyword>
<keyword id="KW-0687">Ribonucleoprotein</keyword>
<keyword id="KW-0689">Ribosomal protein</keyword>
<keyword id="KW-0694">RNA-binding</keyword>
<keyword id="KW-0699">rRNA-binding</keyword>